<keyword id="KW-0002">3D-structure</keyword>
<keyword id="KW-0186">Copper</keyword>
<keyword id="KW-0903">Direct protein sequencing</keyword>
<keyword id="KW-1015">Disulfide bond</keyword>
<keyword id="KW-0249">Electron transport</keyword>
<keyword id="KW-0479">Metal-binding</keyword>
<keyword id="KW-0813">Transport</keyword>
<organism>
    <name type="scientific">Cucumis sativus</name>
    <name type="common">Cucumber</name>
    <dbReference type="NCBI Taxonomy" id="3659"/>
    <lineage>
        <taxon>Eukaryota</taxon>
        <taxon>Viridiplantae</taxon>
        <taxon>Streptophyta</taxon>
        <taxon>Embryophyta</taxon>
        <taxon>Tracheophyta</taxon>
        <taxon>Spermatophyta</taxon>
        <taxon>Magnoliopsida</taxon>
        <taxon>eudicotyledons</taxon>
        <taxon>Gunneridae</taxon>
        <taxon>Pentapetalae</taxon>
        <taxon>rosids</taxon>
        <taxon>fabids</taxon>
        <taxon>Cucurbitales</taxon>
        <taxon>Cucurbitaceae</taxon>
        <taxon>Benincaseae</taxon>
        <taxon>Cucumis</taxon>
    </lineage>
</organism>
<feature type="chain" id="PRO_0000085552" description="Basic blue protein">
    <location>
        <begin position="1"/>
        <end position="96"/>
    </location>
</feature>
<feature type="domain" description="Phytocyanin" evidence="1">
    <location>
        <begin position="1"/>
        <end position="96"/>
    </location>
</feature>
<feature type="binding site">
    <location>
        <position position="39"/>
    </location>
    <ligand>
        <name>Cu cation</name>
        <dbReference type="ChEBI" id="CHEBI:23378"/>
    </ligand>
</feature>
<feature type="binding site">
    <location>
        <position position="79"/>
    </location>
    <ligand>
        <name>Cu cation</name>
        <dbReference type="ChEBI" id="CHEBI:23378"/>
    </ligand>
</feature>
<feature type="binding site">
    <location>
        <position position="84"/>
    </location>
    <ligand>
        <name>Cu cation</name>
        <dbReference type="ChEBI" id="CHEBI:23378"/>
    </ligand>
</feature>
<feature type="binding site">
    <location>
        <position position="89"/>
    </location>
    <ligand>
        <name>Cu cation</name>
        <dbReference type="ChEBI" id="CHEBI:23378"/>
    </ligand>
</feature>
<feature type="disulfide bond">
    <location>
        <begin position="52"/>
        <end position="85"/>
    </location>
</feature>
<feature type="strand" evidence="2">
    <location>
        <begin position="2"/>
        <end position="4"/>
    </location>
</feature>
<feature type="helix" evidence="2">
    <location>
        <begin position="7"/>
        <end position="9"/>
    </location>
</feature>
<feature type="turn" evidence="2">
    <location>
        <begin position="16"/>
        <end position="21"/>
    </location>
</feature>
<feature type="strand" evidence="2">
    <location>
        <begin position="29"/>
        <end position="33"/>
    </location>
</feature>
<feature type="strand" evidence="2">
    <location>
        <begin position="41"/>
        <end position="44"/>
    </location>
</feature>
<feature type="helix" evidence="2">
    <location>
        <begin position="46"/>
        <end position="51"/>
    </location>
</feature>
<feature type="strand" evidence="2">
    <location>
        <begin position="59"/>
        <end position="61"/>
    </location>
</feature>
<feature type="strand" evidence="2">
    <location>
        <begin position="63"/>
        <end position="69"/>
    </location>
</feature>
<feature type="strand" evidence="2">
    <location>
        <begin position="72"/>
        <end position="78"/>
    </location>
</feature>
<feature type="turn" evidence="2">
    <location>
        <begin position="82"/>
        <end position="84"/>
    </location>
</feature>
<feature type="helix" evidence="2">
    <location>
        <begin position="85"/>
        <end position="87"/>
    </location>
</feature>
<feature type="strand" evidence="2">
    <location>
        <begin position="90"/>
        <end position="95"/>
    </location>
</feature>
<comment type="miscellaneous">
    <text>This type 1 copper protein appears to be the same protein in cucumber seedlings, peelings, and several other plant sources.</text>
</comment>
<dbReference type="PIR" id="A00312">
    <property type="entry name" value="BUKV"/>
</dbReference>
<dbReference type="PDB" id="2CBP">
    <property type="method" value="X-ray"/>
    <property type="resolution" value="1.80 A"/>
    <property type="chains" value="A=1-96"/>
</dbReference>
<dbReference type="PDBsum" id="2CBP"/>
<dbReference type="SMR" id="P00303"/>
<dbReference type="eggNOG" id="ENOG502S11U">
    <property type="taxonomic scope" value="Eukaryota"/>
</dbReference>
<dbReference type="EvolutionaryTrace" id="P00303"/>
<dbReference type="GO" id="GO:0009055">
    <property type="term" value="F:electron transfer activity"/>
    <property type="evidence" value="ECO:0007669"/>
    <property type="project" value="InterPro"/>
</dbReference>
<dbReference type="GO" id="GO:0046872">
    <property type="term" value="F:metal ion binding"/>
    <property type="evidence" value="ECO:0007669"/>
    <property type="project" value="UniProtKB-KW"/>
</dbReference>
<dbReference type="CDD" id="cd11013">
    <property type="entry name" value="Plantacyanin"/>
    <property type="match status" value="1"/>
</dbReference>
<dbReference type="FunFam" id="2.60.40.420:FF:000013">
    <property type="entry name" value="basic blue protein-like"/>
    <property type="match status" value="1"/>
</dbReference>
<dbReference type="Gene3D" id="2.60.40.420">
    <property type="entry name" value="Cupredoxins - blue copper proteins"/>
    <property type="match status" value="1"/>
</dbReference>
<dbReference type="InterPro" id="IPR028871">
    <property type="entry name" value="BlueCu_1_BS"/>
</dbReference>
<dbReference type="InterPro" id="IPR008972">
    <property type="entry name" value="Cupredoxin"/>
</dbReference>
<dbReference type="InterPro" id="IPR039391">
    <property type="entry name" value="Phytocyanin-like"/>
</dbReference>
<dbReference type="InterPro" id="IPR003245">
    <property type="entry name" value="Phytocyanin_dom"/>
</dbReference>
<dbReference type="InterPro" id="IPR041844">
    <property type="entry name" value="Plantacyanin"/>
</dbReference>
<dbReference type="PANTHER" id="PTHR33021:SF424">
    <property type="entry name" value="BASIC BLUE PROTEIN"/>
    <property type="match status" value="1"/>
</dbReference>
<dbReference type="PANTHER" id="PTHR33021">
    <property type="entry name" value="BLUE COPPER PROTEIN"/>
    <property type="match status" value="1"/>
</dbReference>
<dbReference type="Pfam" id="PF02298">
    <property type="entry name" value="Cu_bind_like"/>
    <property type="match status" value="1"/>
</dbReference>
<dbReference type="SUPFAM" id="SSF49503">
    <property type="entry name" value="Cupredoxins"/>
    <property type="match status" value="1"/>
</dbReference>
<dbReference type="PROSITE" id="PS00196">
    <property type="entry name" value="COPPER_BLUE"/>
    <property type="match status" value="1"/>
</dbReference>
<dbReference type="PROSITE" id="PS51485">
    <property type="entry name" value="PHYTOCYANIN"/>
    <property type="match status" value="1"/>
</dbReference>
<protein>
    <recommendedName>
        <fullName>Basic blue protein</fullName>
    </recommendedName>
    <alternativeName>
        <fullName>CBP</fullName>
    </alternativeName>
    <alternativeName>
        <fullName>Cusacyanin</fullName>
    </alternativeName>
    <alternativeName>
        <fullName>Plantacyanin</fullName>
    </alternativeName>
</protein>
<name>BABL_CUCSA</name>
<reference key="1">
    <citation type="journal article" date="1982" name="Proc. Natl. Acad. Sci. U.S.A.">
        <title>Amino acid sequence of a basic blue protein from cucumber seedlings.</title>
        <authorList>
            <person name="Murata M."/>
            <person name="Begg G.S."/>
            <person name="Lambrou F."/>
            <person name="Leslie B."/>
            <person name="Simpson R.J."/>
            <person name="Freeman H.C."/>
            <person name="Morgan F.J."/>
        </authorList>
    </citation>
    <scope>PROTEIN SEQUENCE</scope>
    <source>
        <tissue>Seedling</tissue>
    </source>
</reference>
<reference key="2">
    <citation type="journal article" date="1988" name="Science">
        <title>Phase determination by multiple-wavelength X-ray diffraction: crystal structure of a basic 'blue' copper protein from cucumbers.</title>
        <authorList>
            <person name="Guss J.M."/>
            <person name="Merritt E.A."/>
            <person name="Phizackerly R.P."/>
            <person name="Hedman B."/>
            <person name="Murata M."/>
            <person name="Hodgson K.O."/>
            <person name="Freeman H.C."/>
        </authorList>
    </citation>
    <scope>X-RAY CRYSTALLOGRAPHY (2.5 ANGSTROMS)</scope>
</reference>
<accession>P00303</accession>
<sequence>AVYVVGGSGGWTFNTESWPKGKRFRAGDILLFNYNPXMHNVVVVNQGGFSTCNTPAGAKVYTSGRDQIKLPKGQSYFICNFPGHCQSGMKIAVNAL</sequence>
<evidence type="ECO:0000255" key="1">
    <source>
        <dbReference type="PROSITE-ProRule" id="PRU00818"/>
    </source>
</evidence>
<evidence type="ECO:0007829" key="2">
    <source>
        <dbReference type="PDB" id="2CBP"/>
    </source>
</evidence>
<proteinExistence type="evidence at protein level"/>